<gene>
    <name evidence="9" type="primary">HMGR2</name>
</gene>
<accession>A0A0A1C930</accession>
<organism>
    <name type="scientific">Panax ginseng</name>
    <name type="common">Korean ginseng</name>
    <dbReference type="NCBI Taxonomy" id="4054"/>
    <lineage>
        <taxon>Eukaryota</taxon>
        <taxon>Viridiplantae</taxon>
        <taxon>Streptophyta</taxon>
        <taxon>Embryophyta</taxon>
        <taxon>Tracheophyta</taxon>
        <taxon>Spermatophyta</taxon>
        <taxon>Magnoliopsida</taxon>
        <taxon>eudicotyledons</taxon>
        <taxon>Gunneridae</taxon>
        <taxon>Pentapetalae</taxon>
        <taxon>asterids</taxon>
        <taxon>campanulids</taxon>
        <taxon>Apiales</taxon>
        <taxon>Araliaceae</taxon>
        <taxon>Panax</taxon>
    </lineage>
</organism>
<comment type="function">
    <text evidence="3 8 10">Catalyzes the synthesis of mevalonate, the specific precursor of all isoprenoid compounds present in plants (By similarity). Component of the triterpene saponins (e.g. ginsenosides or panaxosides) and phytosterols biosynthetic pathways (PubMed:24569845, PubMed:29378087).</text>
</comment>
<comment type="catalytic activity">
    <reaction evidence="6">
        <text>(R)-mevalonate + 2 NADP(+) + CoA = (3S)-3-hydroxy-3-methylglutaryl-CoA + 2 NADPH + 2 H(+)</text>
        <dbReference type="Rhea" id="RHEA:15989"/>
        <dbReference type="ChEBI" id="CHEBI:15378"/>
        <dbReference type="ChEBI" id="CHEBI:36464"/>
        <dbReference type="ChEBI" id="CHEBI:43074"/>
        <dbReference type="ChEBI" id="CHEBI:57287"/>
        <dbReference type="ChEBI" id="CHEBI:57783"/>
        <dbReference type="ChEBI" id="CHEBI:58349"/>
        <dbReference type="EC" id="1.1.1.34"/>
    </reaction>
</comment>
<comment type="activity regulation">
    <text evidence="8">Competitive inhibition by mevinolin (Mev) is leading to a significant reduction of total ginsenoside in adventitious roots. Triggered by darkness.</text>
</comment>
<comment type="pathway">
    <text evidence="11">Metabolic intermediate biosynthesis; (R)-mevalonate biosynthesis; (R)-mevalonate from acetyl-CoA: step 3/3.</text>
</comment>
<comment type="subcellular location">
    <subcellularLocation>
        <location evidence="1">Endoplasmic reticulum membrane</location>
        <topology evidence="4">Multi-pass membrane protein</topology>
    </subcellularLocation>
    <subcellularLocation>
        <location evidence="1">Plastid</location>
        <location evidence="1">Chloroplast membrane</location>
        <topology evidence="4">Multi-pass membrane protein</topology>
    </subcellularLocation>
    <subcellularLocation>
        <location evidence="1">Peroxisome membrane</location>
        <topology evidence="4">Multi-pass membrane protein</topology>
    </subcellularLocation>
    <text evidence="8">Localized in intracellular vesicles.</text>
</comment>
<comment type="tissue specificity">
    <text evidence="8">Mostly expressed in the petioles of seedlings, seedlings and roots, and, to a lower extent, in seeds, leaves, stems and flowers.</text>
</comment>
<comment type="developmental stage">
    <text evidence="8">Accumulates progressively in mature roots.</text>
</comment>
<comment type="induction">
    <text evidence="8">Repressed by darkness in roots and leaves, but increased ginsenosides accumulation. Repressed transiently by mevinolin (Mev).</text>
</comment>
<comment type="similarity">
    <text evidence="11">Belongs to the HMG-CoA reductase family.</text>
</comment>
<reference key="1">
    <citation type="journal article" date="2014" name="Plant Physiol.">
        <title>Functional analysis of 3-hydroxy-3-methylglutaryl coenzyme a reductase encoding genes in triterpene saponin-producing ginseng.</title>
        <authorList>
            <person name="Kim Y.-J."/>
            <person name="Lee O.R."/>
            <person name="Oh J.Y."/>
            <person name="Jang M.-G."/>
            <person name="Yang D.-C."/>
        </authorList>
    </citation>
    <scope>NUCLEOTIDE SEQUENCE [MRNA]</scope>
    <scope>TISSUE SPECIFICITY</scope>
    <scope>DEVELOPMENTAL STAGE</scope>
    <scope>ACTIVITY REGULATION</scope>
    <scope>INDUCTION BY METHYL JASMONATE</scope>
    <scope>SUBCELLULAR LOCATION</scope>
    <source>
        <strain>cv. Yunpoong</strain>
    </source>
</reference>
<reference key="2">
    <citation type="journal article" date="2018" name="Biotechnol. Appl. Biochem.">
        <title>Advances in ginsenoside biosynthesis and metabolic regulation.</title>
        <authorList>
            <person name="Lu J."/>
            <person name="Li J."/>
            <person name="Wang S."/>
            <person name="Yao L."/>
            <person name="Liang W."/>
            <person name="Wang J."/>
            <person name="Gao W."/>
        </authorList>
    </citation>
    <scope>REVIEW</scope>
</reference>
<reference key="3">
    <citation type="journal article" date="2018" name="Molecules">
        <title>Progress on the studies of the key enzymes of ginsenoside biosynthesis.</title>
        <authorList>
            <person name="Yang J.-L."/>
            <person name="Hu Z.-F."/>
            <person name="Zhang T.-T."/>
            <person name="Gu A.-D."/>
            <person name="Gong T."/>
            <person name="Zhu P."/>
        </authorList>
    </citation>
    <scope>REVIEW</scope>
</reference>
<evidence type="ECO:0000250" key="1">
    <source>
        <dbReference type="UniProtKB" id="A0A0A1C3I2"/>
    </source>
</evidence>
<evidence type="ECO:0000250" key="2">
    <source>
        <dbReference type="UniProtKB" id="P04035"/>
    </source>
</evidence>
<evidence type="ECO:0000250" key="3">
    <source>
        <dbReference type="UniProtKB" id="P14891"/>
    </source>
</evidence>
<evidence type="ECO:0000255" key="4"/>
<evidence type="ECO:0000255" key="5">
    <source>
        <dbReference type="PROSITE-ProRule" id="PRU00498"/>
    </source>
</evidence>
<evidence type="ECO:0000255" key="6">
    <source>
        <dbReference type="PROSITE-ProRule" id="PRU10003"/>
    </source>
</evidence>
<evidence type="ECO:0000256" key="7">
    <source>
        <dbReference type="SAM" id="MobiDB-lite"/>
    </source>
</evidence>
<evidence type="ECO:0000269" key="8">
    <source>
    </source>
</evidence>
<evidence type="ECO:0000303" key="9">
    <source>
    </source>
</evidence>
<evidence type="ECO:0000303" key="10">
    <source>
    </source>
</evidence>
<evidence type="ECO:0000305" key="11"/>
<evidence type="ECO:0000305" key="12">
    <source>
    </source>
</evidence>
<name>HMR2A_PANGI</name>
<dbReference type="EC" id="1.1.1.34" evidence="6"/>
<dbReference type="EMBL" id="KM386695">
    <property type="protein sequence ID" value="AIX87980.1"/>
    <property type="molecule type" value="mRNA"/>
</dbReference>
<dbReference type="SMR" id="A0A0A1C930"/>
<dbReference type="GlyCosmos" id="A0A0A1C930">
    <property type="glycosylation" value="2 sites, No reported glycans"/>
</dbReference>
<dbReference type="UniPathway" id="UPA00058">
    <property type="reaction ID" value="UER00103"/>
</dbReference>
<dbReference type="GO" id="GO:0031969">
    <property type="term" value="C:chloroplast membrane"/>
    <property type="evidence" value="ECO:0007669"/>
    <property type="project" value="UniProtKB-SubCell"/>
</dbReference>
<dbReference type="GO" id="GO:0005789">
    <property type="term" value="C:endoplasmic reticulum membrane"/>
    <property type="evidence" value="ECO:0007669"/>
    <property type="project" value="UniProtKB-SubCell"/>
</dbReference>
<dbReference type="GO" id="GO:0005778">
    <property type="term" value="C:peroxisomal membrane"/>
    <property type="evidence" value="ECO:0007669"/>
    <property type="project" value="UniProtKB-SubCell"/>
</dbReference>
<dbReference type="GO" id="GO:0004420">
    <property type="term" value="F:hydroxymethylglutaryl-CoA reductase (NADPH) activity"/>
    <property type="evidence" value="ECO:0007669"/>
    <property type="project" value="UniProtKB-EC"/>
</dbReference>
<dbReference type="GO" id="GO:0015936">
    <property type="term" value="P:coenzyme A metabolic process"/>
    <property type="evidence" value="ECO:0007669"/>
    <property type="project" value="InterPro"/>
</dbReference>
<dbReference type="GO" id="GO:0009753">
    <property type="term" value="P:response to jasmonic acid"/>
    <property type="evidence" value="ECO:0000270"/>
    <property type="project" value="UniProtKB"/>
</dbReference>
<dbReference type="GO" id="GO:0016135">
    <property type="term" value="P:saponin biosynthetic process"/>
    <property type="evidence" value="ECO:0000315"/>
    <property type="project" value="UniProtKB"/>
</dbReference>
<dbReference type="GO" id="GO:0016126">
    <property type="term" value="P:sterol biosynthetic process"/>
    <property type="evidence" value="ECO:0007669"/>
    <property type="project" value="TreeGrafter"/>
</dbReference>
<dbReference type="GO" id="GO:0016104">
    <property type="term" value="P:triterpenoid biosynthetic process"/>
    <property type="evidence" value="ECO:0000315"/>
    <property type="project" value="UniProtKB"/>
</dbReference>
<dbReference type="CDD" id="cd00643">
    <property type="entry name" value="HMG-CoA_reductase_classI"/>
    <property type="match status" value="1"/>
</dbReference>
<dbReference type="FunFam" id="1.10.3270.10:FF:000002">
    <property type="entry name" value="3-hydroxy-3-methylglutaryl coenzyme A reductase"/>
    <property type="match status" value="1"/>
</dbReference>
<dbReference type="FunFam" id="3.30.70.420:FF:000001">
    <property type="entry name" value="3-hydroxy-3-methylglutaryl coenzyme A reductase"/>
    <property type="match status" value="1"/>
</dbReference>
<dbReference type="FunFam" id="3.90.770.10:FF:000001">
    <property type="entry name" value="3-hydroxy-3-methylglutaryl coenzyme A reductase"/>
    <property type="match status" value="1"/>
</dbReference>
<dbReference type="Gene3D" id="3.90.770.10">
    <property type="entry name" value="3-hydroxy-3-methylglutaryl-coenzyme A Reductase, Chain A, domain 2"/>
    <property type="match status" value="1"/>
</dbReference>
<dbReference type="Gene3D" id="1.10.3270.10">
    <property type="entry name" value="HMGR, N-terminal domain"/>
    <property type="match status" value="1"/>
</dbReference>
<dbReference type="Gene3D" id="3.30.70.420">
    <property type="entry name" value="Hydroxymethylglutaryl-CoA reductase, class I/II, NAD/NADP-binding domain"/>
    <property type="match status" value="1"/>
</dbReference>
<dbReference type="InterPro" id="IPR002202">
    <property type="entry name" value="HMG_CoA_Rdtase"/>
</dbReference>
<dbReference type="InterPro" id="IPR023074">
    <property type="entry name" value="HMG_CoA_Rdtase_cat_sf"/>
</dbReference>
<dbReference type="InterPro" id="IPR023076">
    <property type="entry name" value="HMG_CoA_Rdtase_CS"/>
</dbReference>
<dbReference type="InterPro" id="IPR004554">
    <property type="entry name" value="HMG_CoA_Rdtase_eu_arc"/>
</dbReference>
<dbReference type="InterPro" id="IPR023282">
    <property type="entry name" value="HMG_CoA_Rdtase_N"/>
</dbReference>
<dbReference type="InterPro" id="IPR009023">
    <property type="entry name" value="HMG_CoA_Rdtase_NAD(P)-bd_sf"/>
</dbReference>
<dbReference type="InterPro" id="IPR009029">
    <property type="entry name" value="HMG_CoA_Rdtase_sub-bd_dom_sf"/>
</dbReference>
<dbReference type="NCBIfam" id="TIGR00533">
    <property type="entry name" value="HMG_CoA_R_NADP"/>
    <property type="match status" value="1"/>
</dbReference>
<dbReference type="PANTHER" id="PTHR10572">
    <property type="entry name" value="3-HYDROXY-3-METHYLGLUTARYL-COENZYME A REDUCTASE"/>
    <property type="match status" value="1"/>
</dbReference>
<dbReference type="PANTHER" id="PTHR10572:SF56">
    <property type="entry name" value="3-HYDROXY-3-METHYLGLUTARYL-COENZYME A REDUCTASE 1"/>
    <property type="match status" value="1"/>
</dbReference>
<dbReference type="Pfam" id="PF00368">
    <property type="entry name" value="HMG-CoA_red"/>
    <property type="match status" value="1"/>
</dbReference>
<dbReference type="PRINTS" id="PR00071">
    <property type="entry name" value="HMGCOARDTASE"/>
</dbReference>
<dbReference type="SUPFAM" id="SSF55035">
    <property type="entry name" value="NAD-binding domain of HMG-CoA reductase"/>
    <property type="match status" value="1"/>
</dbReference>
<dbReference type="SUPFAM" id="SSF56542">
    <property type="entry name" value="Substrate-binding domain of HMG-CoA reductase"/>
    <property type="match status" value="1"/>
</dbReference>
<dbReference type="PROSITE" id="PS00066">
    <property type="entry name" value="HMG_COA_REDUCTASE_1"/>
    <property type="match status" value="1"/>
</dbReference>
<dbReference type="PROSITE" id="PS00318">
    <property type="entry name" value="HMG_COA_REDUCTASE_2"/>
    <property type="match status" value="1"/>
</dbReference>
<dbReference type="PROSITE" id="PS01192">
    <property type="entry name" value="HMG_COA_REDUCTASE_3"/>
    <property type="match status" value="1"/>
</dbReference>
<dbReference type="PROSITE" id="PS50065">
    <property type="entry name" value="HMG_COA_REDUCTASE_4"/>
    <property type="match status" value="1"/>
</dbReference>
<feature type="chain" id="PRO_0000446947" description="3-hydroxy-3-methylglutaryl coenzyme A reductase 2-A">
    <location>
        <begin position="1"/>
        <end position="594"/>
    </location>
</feature>
<feature type="topological domain" description="Lumenal" evidence="12">
    <location>
        <begin position="1"/>
        <end position="37"/>
    </location>
</feature>
<feature type="transmembrane region" description="Helical" evidence="4">
    <location>
        <begin position="38"/>
        <end position="58"/>
    </location>
</feature>
<feature type="topological domain" description="Cytoplasmic" evidence="12">
    <location>
        <begin position="59"/>
        <end position="81"/>
    </location>
</feature>
<feature type="transmembrane region" description="Helical" evidence="4">
    <location>
        <begin position="82"/>
        <end position="102"/>
    </location>
</feature>
<feature type="topological domain" description="Lumenal" evidence="12">
    <location>
        <begin position="103"/>
        <end position="549"/>
    </location>
</feature>
<feature type="transmembrane region" description="Helical" evidence="4">
    <location>
        <begin position="550"/>
        <end position="570"/>
    </location>
</feature>
<feature type="topological domain" description="Cytoplasmic" evidence="12">
    <location>
        <begin position="571"/>
        <end position="594"/>
    </location>
</feature>
<feature type="region of interest" description="Disordered" evidence="7">
    <location>
        <begin position="1"/>
        <end position="32"/>
    </location>
</feature>
<feature type="active site" description="Charge relay system" evidence="2">
    <location>
        <position position="273"/>
    </location>
</feature>
<feature type="active site" description="Charge relay system" evidence="2">
    <location>
        <position position="405"/>
    </location>
</feature>
<feature type="active site" description="Charge relay system" evidence="2">
    <location>
        <position position="481"/>
    </location>
</feature>
<feature type="active site" description="Proton donor" evidence="6">
    <location>
        <position position="579"/>
    </location>
</feature>
<feature type="glycosylation site" description="N-linked (GlcNAc...) asparagine" evidence="5">
    <location>
        <position position="261"/>
    </location>
</feature>
<feature type="glycosylation site" description="N-linked (GlcNAc...) asparagine" evidence="5">
    <location>
        <position position="337"/>
    </location>
</feature>
<keyword id="KW-0150">Chloroplast</keyword>
<keyword id="KW-0256">Endoplasmic reticulum</keyword>
<keyword id="KW-0325">Glycoprotein</keyword>
<keyword id="KW-0414">Isoprene biosynthesis</keyword>
<keyword id="KW-0472">Membrane</keyword>
<keyword id="KW-0521">NADP</keyword>
<keyword id="KW-0560">Oxidoreductase</keyword>
<keyword id="KW-0576">Peroxisome</keyword>
<keyword id="KW-0934">Plastid</keyword>
<keyword id="KW-0812">Transmembrane</keyword>
<keyword id="KW-1133">Transmembrane helix</keyword>
<proteinExistence type="evidence at transcript level"/>
<sequence length="594" mass="63621">MDVRRRPVKSLSSAKTATAGEPPKSQQQHPKASDALPLPLYLTNGLFFTMFFSVMYFLLHRWREKIRNSTPLHVVTLSELAALVLLMASVIYLLGFFGIGFVRSVIRPSPDAWDILEDDNAINEEDSRREPCAEAIDCSLPPKPKIVHMVPQKALNPKSAFADMMVEQPALAIAPLTEEDEEIVKSVVTGKIPSYSLESKLGDCKKAASIRREALQRITGKSLAGLPLDGFDYKSILGQCCEMPVGYVQIPVGIAGPLLLNETEYSVPMATTEGCLVASTNRGCKAIYASGGATSVLLRDGMTRAPVVRFSTVKRAAELKFFLEEPLNYDTPAHVFNKSSRFGRLQGIKCAVAGKNLYIRFTCSTGDAMGMNMVSKGVQNVLDFLQSDFPDMDVMGISGNYCSDKKPAAVNWIEGCGKSVVCEAIIKEEVVKKVLKTNVAALVELNMLKNLAGSAVAGALGGFNAHASNIVSAVYISTGQDPAQNVESSHCITMMEAVNNGKDLHISVTMPSIEVGTVGGGTQLASQSACLNLLGVKGASKESPGSNSRLLASIVAGSVLAGELSLMSALAAGQLVKSHMKYNRSSKDITKLSS</sequence>
<protein>
    <recommendedName>
        <fullName evidence="12">3-hydroxy-3-methylglutaryl coenzyme A reductase 2-A</fullName>
        <shortName evidence="9">HMG-CoA reductase 2</shortName>
        <shortName evidence="6">Hydroxymethylglutaryl-CoA reductase</shortName>
        <shortName evidence="9">PgHMGR2</shortName>
        <ecNumber evidence="6">1.1.1.34</ecNumber>
    </recommendedName>
</protein>